<organism>
    <name type="scientific">Homo sapiens</name>
    <name type="common">Human</name>
    <dbReference type="NCBI Taxonomy" id="9606"/>
    <lineage>
        <taxon>Eukaryota</taxon>
        <taxon>Metazoa</taxon>
        <taxon>Chordata</taxon>
        <taxon>Craniata</taxon>
        <taxon>Vertebrata</taxon>
        <taxon>Euteleostomi</taxon>
        <taxon>Mammalia</taxon>
        <taxon>Eutheria</taxon>
        <taxon>Euarchontoglires</taxon>
        <taxon>Primates</taxon>
        <taxon>Haplorrhini</taxon>
        <taxon>Catarrhini</taxon>
        <taxon>Hominidae</taxon>
        <taxon>Homo</taxon>
    </lineage>
</organism>
<keyword id="KW-0002">3D-structure</keyword>
<keyword id="KW-0007">Acetylation</keyword>
<keyword id="KW-0025">Alternative splicing</keyword>
<keyword id="KW-0963">Cytoplasm</keyword>
<keyword id="KW-0225">Disease variant</keyword>
<keyword id="KW-0378">Hydrolase</keyword>
<keyword id="KW-1267">Proteomics identification</keyword>
<keyword id="KW-0662">Pyridine nucleotide biosynthesis</keyword>
<keyword id="KW-0663">Pyridoxal phosphate</keyword>
<keyword id="KW-1185">Reference proteome</keyword>
<gene>
    <name evidence="1 11" type="primary">KYNU</name>
</gene>
<proteinExistence type="evidence at protein level"/>
<dbReference type="EC" id="3.7.1.3" evidence="1 2 4 7 8"/>
<dbReference type="EMBL" id="U57721">
    <property type="protein sequence ID" value="AAC50650.1"/>
    <property type="molecule type" value="mRNA"/>
</dbReference>
<dbReference type="EMBL" id="AK315343">
    <property type="protein sequence ID" value="BAG37742.1"/>
    <property type="molecule type" value="mRNA"/>
</dbReference>
<dbReference type="EMBL" id="CR457423">
    <property type="protein sequence ID" value="CAG33704.1"/>
    <property type="molecule type" value="mRNA"/>
</dbReference>
<dbReference type="EMBL" id="AC013437">
    <property type="status" value="NOT_ANNOTATED_CDS"/>
    <property type="molecule type" value="Genomic_DNA"/>
</dbReference>
<dbReference type="EMBL" id="AC013444">
    <property type="status" value="NOT_ANNOTATED_CDS"/>
    <property type="molecule type" value="Genomic_DNA"/>
</dbReference>
<dbReference type="EMBL" id="CH471058">
    <property type="protein sequence ID" value="EAX11599.1"/>
    <property type="molecule type" value="Genomic_DNA"/>
</dbReference>
<dbReference type="EMBL" id="CH471058">
    <property type="protein sequence ID" value="EAX11600.1"/>
    <property type="molecule type" value="Genomic_DNA"/>
</dbReference>
<dbReference type="EMBL" id="CH471058">
    <property type="protein sequence ID" value="EAX11601.1"/>
    <property type="molecule type" value="Genomic_DNA"/>
</dbReference>
<dbReference type="EMBL" id="BC000879">
    <property type="protein sequence ID" value="AAH00879.1"/>
    <property type="molecule type" value="mRNA"/>
</dbReference>
<dbReference type="CCDS" id="CCDS2183.1">
    <molecule id="Q16719-1"/>
</dbReference>
<dbReference type="CCDS" id="CCDS33299.1">
    <molecule id="Q16719-2"/>
</dbReference>
<dbReference type="PIR" id="G02652">
    <property type="entry name" value="G02652"/>
</dbReference>
<dbReference type="RefSeq" id="NP_001028170.1">
    <molecule id="Q16719-2"/>
    <property type="nucleotide sequence ID" value="NM_001032998.2"/>
</dbReference>
<dbReference type="RefSeq" id="NP_001186170.1">
    <molecule id="Q16719-1"/>
    <property type="nucleotide sequence ID" value="NM_001199241.2"/>
</dbReference>
<dbReference type="RefSeq" id="NP_003928.1">
    <molecule id="Q16719-1"/>
    <property type="nucleotide sequence ID" value="NM_003937.3"/>
</dbReference>
<dbReference type="RefSeq" id="XP_016860706.1">
    <molecule id="Q16719-2"/>
    <property type="nucleotide sequence ID" value="XM_017005217.2"/>
</dbReference>
<dbReference type="RefSeq" id="XP_047302207.1">
    <molecule id="Q16719-2"/>
    <property type="nucleotide sequence ID" value="XM_047446251.1"/>
</dbReference>
<dbReference type="RefSeq" id="XP_047302208.1">
    <molecule id="Q16719-2"/>
    <property type="nucleotide sequence ID" value="XM_047446252.1"/>
</dbReference>
<dbReference type="RefSeq" id="XP_054200390.1">
    <molecule id="Q16719-2"/>
    <property type="nucleotide sequence ID" value="XM_054344415.1"/>
</dbReference>
<dbReference type="RefSeq" id="XP_054200391.1">
    <molecule id="Q16719-2"/>
    <property type="nucleotide sequence ID" value="XM_054344416.1"/>
</dbReference>
<dbReference type="RefSeq" id="XP_054200392.1">
    <molecule id="Q16719-2"/>
    <property type="nucleotide sequence ID" value="XM_054344417.1"/>
</dbReference>
<dbReference type="PDB" id="2HZP">
    <property type="method" value="X-ray"/>
    <property type="resolution" value="2.00 A"/>
    <property type="chains" value="A=1-465"/>
</dbReference>
<dbReference type="PDB" id="3E9K">
    <property type="method" value="X-ray"/>
    <property type="resolution" value="1.70 A"/>
    <property type="chains" value="A=1-465"/>
</dbReference>
<dbReference type="PDB" id="7S3V">
    <property type="method" value="X-ray"/>
    <property type="resolution" value="3.25 A"/>
    <property type="chains" value="A/B=1-465"/>
</dbReference>
<dbReference type="PDBsum" id="2HZP"/>
<dbReference type="PDBsum" id="3E9K"/>
<dbReference type="PDBsum" id="7S3V"/>
<dbReference type="SMR" id="Q16719"/>
<dbReference type="BioGRID" id="114454">
    <property type="interactions" value="77"/>
</dbReference>
<dbReference type="FunCoup" id="Q16719">
    <property type="interactions" value="1130"/>
</dbReference>
<dbReference type="IntAct" id="Q16719">
    <property type="interactions" value="17"/>
</dbReference>
<dbReference type="STRING" id="9606.ENSP00000264170"/>
<dbReference type="BindingDB" id="Q16719"/>
<dbReference type="ChEMBL" id="CHEMBL5100"/>
<dbReference type="DrugBank" id="DB00160">
    <property type="generic name" value="Alanine"/>
</dbReference>
<dbReference type="DrugBank" id="DB07069">
    <property type="generic name" value="m-Hydroxyhippuric acid"/>
</dbReference>
<dbReference type="DrugBank" id="DB00114">
    <property type="generic name" value="Pyridoxal phosphate"/>
</dbReference>
<dbReference type="GlyGen" id="Q16719">
    <property type="glycosylation" value="1 site, 1 O-linked glycan (1 site)"/>
</dbReference>
<dbReference type="iPTMnet" id="Q16719"/>
<dbReference type="PhosphoSitePlus" id="Q16719"/>
<dbReference type="SwissPalm" id="Q16719"/>
<dbReference type="BioMuta" id="KYNU"/>
<dbReference type="DMDM" id="3913982"/>
<dbReference type="jPOST" id="Q16719"/>
<dbReference type="MassIVE" id="Q16719"/>
<dbReference type="PaxDb" id="9606-ENSP00000264170"/>
<dbReference type="PeptideAtlas" id="Q16719"/>
<dbReference type="ProteomicsDB" id="61040">
    <molecule id="Q16719-1"/>
</dbReference>
<dbReference type="ProteomicsDB" id="61041">
    <molecule id="Q16719-2"/>
</dbReference>
<dbReference type="Pumba" id="Q16719"/>
<dbReference type="Antibodypedia" id="33609">
    <property type="antibodies" value="359 antibodies from 33 providers"/>
</dbReference>
<dbReference type="DNASU" id="8942"/>
<dbReference type="Ensembl" id="ENST00000264170.9">
    <molecule id="Q16719-1"/>
    <property type="protein sequence ID" value="ENSP00000264170.4"/>
    <property type="gene ID" value="ENSG00000115919.15"/>
</dbReference>
<dbReference type="Ensembl" id="ENST00000375773.6">
    <molecule id="Q16719-2"/>
    <property type="protein sequence ID" value="ENSP00000364928.2"/>
    <property type="gene ID" value="ENSG00000115919.15"/>
</dbReference>
<dbReference type="Ensembl" id="ENST00000409512.5">
    <molecule id="Q16719-1"/>
    <property type="protein sequence ID" value="ENSP00000386731.1"/>
    <property type="gene ID" value="ENSG00000115919.15"/>
</dbReference>
<dbReference type="GeneID" id="8942"/>
<dbReference type="KEGG" id="hsa:8942"/>
<dbReference type="MANE-Select" id="ENST00000264170.9">
    <property type="protein sequence ID" value="ENSP00000264170.4"/>
    <property type="RefSeq nucleotide sequence ID" value="NM_003937.3"/>
    <property type="RefSeq protein sequence ID" value="NP_003928.1"/>
</dbReference>
<dbReference type="UCSC" id="uc002tvk.4">
    <molecule id="Q16719-1"/>
    <property type="organism name" value="human"/>
</dbReference>
<dbReference type="AGR" id="HGNC:6469"/>
<dbReference type="CTD" id="8942"/>
<dbReference type="DisGeNET" id="8942"/>
<dbReference type="GeneCards" id="KYNU"/>
<dbReference type="GeneReviews" id="KYNU"/>
<dbReference type="HGNC" id="HGNC:6469">
    <property type="gene designation" value="KYNU"/>
</dbReference>
<dbReference type="HPA" id="ENSG00000115919">
    <property type="expression patterns" value="Tissue enhanced (liver, urinary bladder)"/>
</dbReference>
<dbReference type="MalaCards" id="KYNU"/>
<dbReference type="MIM" id="236800">
    <property type="type" value="phenotype"/>
</dbReference>
<dbReference type="MIM" id="605197">
    <property type="type" value="gene"/>
</dbReference>
<dbReference type="MIM" id="617661">
    <property type="type" value="phenotype"/>
</dbReference>
<dbReference type="neXtProt" id="NX_Q16719"/>
<dbReference type="OpenTargets" id="ENSG00000115919"/>
<dbReference type="Orphanet" id="521438">
    <property type="disease" value="Congenital vertebral-cardiac-renal anomalies syndrome"/>
</dbReference>
<dbReference type="Orphanet" id="79155">
    <property type="disease" value="Hydroxykynureninuria"/>
</dbReference>
<dbReference type="PharmGKB" id="PA30258"/>
<dbReference type="VEuPathDB" id="HostDB:ENSG00000115919"/>
<dbReference type="eggNOG" id="KOG3846">
    <property type="taxonomic scope" value="Eukaryota"/>
</dbReference>
<dbReference type="GeneTree" id="ENSGT00390000008033"/>
<dbReference type="HOGENOM" id="CLU_003433_4_0_1"/>
<dbReference type="InParanoid" id="Q16719"/>
<dbReference type="OMA" id="LPGWNSH"/>
<dbReference type="OrthoDB" id="5978656at2759"/>
<dbReference type="PAN-GO" id="Q16719">
    <property type="GO annotations" value="4 GO annotations based on evolutionary models"/>
</dbReference>
<dbReference type="PhylomeDB" id="Q16719"/>
<dbReference type="TreeFam" id="TF300707"/>
<dbReference type="BioCyc" id="MetaCyc:HS03952-MONOMER"/>
<dbReference type="BRENDA" id="3.7.1.3">
    <property type="organism ID" value="2681"/>
</dbReference>
<dbReference type="PathwayCommons" id="Q16719"/>
<dbReference type="Reactome" id="R-HSA-71240">
    <property type="pathway name" value="Tryptophan catabolism"/>
</dbReference>
<dbReference type="SABIO-RK" id="Q16719"/>
<dbReference type="SignaLink" id="Q16719"/>
<dbReference type="UniPathway" id="UPA00253">
    <property type="reaction ID" value="UER00329"/>
</dbReference>
<dbReference type="UniPathway" id="UPA00334">
    <property type="reaction ID" value="UER00455"/>
</dbReference>
<dbReference type="BioGRID-ORCS" id="8942">
    <property type="hits" value="23 hits in 1164 CRISPR screens"/>
</dbReference>
<dbReference type="ChiTaRS" id="KYNU">
    <property type="organism name" value="human"/>
</dbReference>
<dbReference type="EvolutionaryTrace" id="Q16719"/>
<dbReference type="GeneWiki" id="Kynureninase"/>
<dbReference type="GenomeRNAi" id="8942"/>
<dbReference type="Pharos" id="Q16719">
    <property type="development level" value="Tchem"/>
</dbReference>
<dbReference type="PRO" id="PR:Q16719"/>
<dbReference type="Proteomes" id="UP000005640">
    <property type="component" value="Chromosome 2"/>
</dbReference>
<dbReference type="RNAct" id="Q16719">
    <property type="molecule type" value="protein"/>
</dbReference>
<dbReference type="Bgee" id="ENSG00000115919">
    <property type="expression patterns" value="Expressed in endometrium epithelium and 156 other cell types or tissues"/>
</dbReference>
<dbReference type="ExpressionAtlas" id="Q16719">
    <property type="expression patterns" value="baseline and differential"/>
</dbReference>
<dbReference type="GO" id="GO:0005737">
    <property type="term" value="C:cytoplasm"/>
    <property type="evidence" value="ECO:0000318"/>
    <property type="project" value="GO_Central"/>
</dbReference>
<dbReference type="GO" id="GO:0005829">
    <property type="term" value="C:cytosol"/>
    <property type="evidence" value="ECO:0000314"/>
    <property type="project" value="HPA"/>
</dbReference>
<dbReference type="GO" id="GO:0005739">
    <property type="term" value="C:mitochondrion"/>
    <property type="evidence" value="ECO:0000314"/>
    <property type="project" value="UniProtKB"/>
</dbReference>
<dbReference type="GO" id="GO:0005654">
    <property type="term" value="C:nucleoplasm"/>
    <property type="evidence" value="ECO:0000314"/>
    <property type="project" value="HPA"/>
</dbReference>
<dbReference type="GO" id="GO:0030429">
    <property type="term" value="F:kynureninase activity"/>
    <property type="evidence" value="ECO:0000314"/>
    <property type="project" value="UniProtKB"/>
</dbReference>
<dbReference type="GO" id="GO:0042803">
    <property type="term" value="F:protein homodimerization activity"/>
    <property type="evidence" value="ECO:0000314"/>
    <property type="project" value="UniProtKB"/>
</dbReference>
<dbReference type="GO" id="GO:0030170">
    <property type="term" value="F:pyridoxal phosphate binding"/>
    <property type="evidence" value="ECO:0007669"/>
    <property type="project" value="UniProtKB-UniRule"/>
</dbReference>
<dbReference type="GO" id="GO:0034354">
    <property type="term" value="P:'de novo' NAD biosynthetic process from L-tryptophan"/>
    <property type="evidence" value="ECO:0007669"/>
    <property type="project" value="UniProtKB-UniRule"/>
</dbReference>
<dbReference type="GO" id="GO:0043420">
    <property type="term" value="P:anthranilate metabolic process"/>
    <property type="evidence" value="ECO:0000314"/>
    <property type="project" value="UniProtKB"/>
</dbReference>
<dbReference type="GO" id="GO:0097053">
    <property type="term" value="P:L-kynurenine catabolic process"/>
    <property type="evidence" value="ECO:0007669"/>
    <property type="project" value="UniProtKB-UniRule"/>
</dbReference>
<dbReference type="GO" id="GO:0006569">
    <property type="term" value="P:L-tryptophan catabolic process"/>
    <property type="evidence" value="ECO:0000315"/>
    <property type="project" value="UniProtKB"/>
</dbReference>
<dbReference type="GO" id="GO:0019441">
    <property type="term" value="P:L-tryptophan catabolic process to kynurenine"/>
    <property type="evidence" value="ECO:0000318"/>
    <property type="project" value="GO_Central"/>
</dbReference>
<dbReference type="GO" id="GO:0009435">
    <property type="term" value="P:NAD biosynthetic process"/>
    <property type="evidence" value="ECO:0000315"/>
    <property type="project" value="UniProtKB"/>
</dbReference>
<dbReference type="GO" id="GO:0019805">
    <property type="term" value="P:quinolinate biosynthetic process"/>
    <property type="evidence" value="ECO:0000314"/>
    <property type="project" value="UniProtKB"/>
</dbReference>
<dbReference type="GO" id="GO:0034341">
    <property type="term" value="P:response to type II interferon"/>
    <property type="evidence" value="ECO:0000314"/>
    <property type="project" value="UniProtKB"/>
</dbReference>
<dbReference type="GO" id="GO:0034516">
    <property type="term" value="P:response to vitamin B6"/>
    <property type="evidence" value="ECO:0000315"/>
    <property type="project" value="UniProtKB"/>
</dbReference>
<dbReference type="FunFam" id="3.40.640.10:FF:000031">
    <property type="entry name" value="Kynureninase"/>
    <property type="match status" value="1"/>
</dbReference>
<dbReference type="FunFam" id="3.90.1150.10:FF:000203">
    <property type="entry name" value="Kynureninase"/>
    <property type="match status" value="1"/>
</dbReference>
<dbReference type="FunFam" id="3.90.1150.10:FF:000104">
    <property type="entry name" value="Kynureninase, putative"/>
    <property type="match status" value="1"/>
</dbReference>
<dbReference type="Gene3D" id="3.90.1150.10">
    <property type="entry name" value="Aspartate Aminotransferase, domain 1"/>
    <property type="match status" value="1"/>
</dbReference>
<dbReference type="Gene3D" id="3.40.640.10">
    <property type="entry name" value="Type I PLP-dependent aspartate aminotransferase-like (Major domain)"/>
    <property type="match status" value="1"/>
</dbReference>
<dbReference type="HAMAP" id="MF_01970">
    <property type="entry name" value="Kynureninase"/>
    <property type="match status" value="1"/>
</dbReference>
<dbReference type="InterPro" id="IPR010111">
    <property type="entry name" value="Kynureninase"/>
</dbReference>
<dbReference type="InterPro" id="IPR015424">
    <property type="entry name" value="PyrdxlP-dep_Trfase"/>
</dbReference>
<dbReference type="InterPro" id="IPR015421">
    <property type="entry name" value="PyrdxlP-dep_Trfase_major"/>
</dbReference>
<dbReference type="InterPro" id="IPR015422">
    <property type="entry name" value="PyrdxlP-dep_Trfase_small"/>
</dbReference>
<dbReference type="NCBIfam" id="TIGR01814">
    <property type="entry name" value="kynureninase"/>
    <property type="match status" value="1"/>
</dbReference>
<dbReference type="PANTHER" id="PTHR14084">
    <property type="entry name" value="KYNURENINASE"/>
    <property type="match status" value="1"/>
</dbReference>
<dbReference type="PANTHER" id="PTHR14084:SF0">
    <property type="entry name" value="KYNURENINASE"/>
    <property type="match status" value="1"/>
</dbReference>
<dbReference type="Pfam" id="PF22580">
    <property type="entry name" value="KYNU_C"/>
    <property type="match status" value="1"/>
</dbReference>
<dbReference type="PIRSF" id="PIRSF038800">
    <property type="entry name" value="KYNU"/>
    <property type="match status" value="1"/>
</dbReference>
<dbReference type="SUPFAM" id="SSF53383">
    <property type="entry name" value="PLP-dependent transferases"/>
    <property type="match status" value="1"/>
</dbReference>
<feature type="chain" id="PRO_0000218657" description="Kynureninase">
    <location>
        <begin position="1"/>
        <end position="465"/>
    </location>
</feature>
<feature type="binding site" evidence="1">
    <location>
        <position position="137"/>
    </location>
    <ligand>
        <name>pyridoxal 5'-phosphate</name>
        <dbReference type="ChEBI" id="CHEBI:597326"/>
    </ligand>
</feature>
<feature type="binding site" evidence="1 4">
    <location>
        <position position="138"/>
    </location>
    <ligand>
        <name>pyridoxal 5'-phosphate</name>
        <dbReference type="ChEBI" id="CHEBI:597326"/>
    </ligand>
</feature>
<feature type="binding site">
    <location>
        <begin position="165"/>
        <end position="168"/>
    </location>
    <ligand>
        <name>pyridoxal 5'-phosphate</name>
        <dbReference type="ChEBI" id="CHEBI:597326"/>
    </ligand>
</feature>
<feature type="binding site" evidence="1">
    <location>
        <position position="221"/>
    </location>
    <ligand>
        <name>pyridoxal 5'-phosphate</name>
        <dbReference type="ChEBI" id="CHEBI:597326"/>
    </ligand>
</feature>
<feature type="binding site" evidence="1 4">
    <location>
        <position position="250"/>
    </location>
    <ligand>
        <name>pyridoxal 5'-phosphate</name>
        <dbReference type="ChEBI" id="CHEBI:597326"/>
    </ligand>
</feature>
<feature type="binding site" evidence="1 4">
    <location>
        <position position="253"/>
    </location>
    <ligand>
        <name>pyridoxal 5'-phosphate</name>
        <dbReference type="ChEBI" id="CHEBI:597326"/>
    </ligand>
</feature>
<feature type="binding site" evidence="1 4">
    <location>
        <position position="275"/>
    </location>
    <ligand>
        <name>pyridoxal 5'-phosphate</name>
        <dbReference type="ChEBI" id="CHEBI:597326"/>
    </ligand>
</feature>
<feature type="binding site" evidence="1 4">
    <location>
        <position position="305"/>
    </location>
    <ligand>
        <name>pyridoxal 5'-phosphate</name>
        <dbReference type="ChEBI" id="CHEBI:597326"/>
    </ligand>
</feature>
<feature type="binding site" evidence="1 4">
    <location>
        <position position="333"/>
    </location>
    <ligand>
        <name>pyridoxal 5'-phosphate</name>
        <dbReference type="ChEBI" id="CHEBI:597326"/>
    </ligand>
</feature>
<feature type="modified residue" description="N-acetylmethionine" evidence="12">
    <location>
        <position position="1"/>
    </location>
</feature>
<feature type="modified residue" description="N6-(pyridoxal phosphate)lysine">
    <location>
        <position position="276"/>
    </location>
</feature>
<feature type="splice variant" id="VSP_042739" description="In isoform 2." evidence="9">
    <original>LVGWFG</original>
    <variation>RSEFFN</variation>
    <location>
        <begin position="302"/>
        <end position="307"/>
    </location>
</feature>
<feature type="splice variant" id="VSP_042740" description="In isoform 2." evidence="9">
    <location>
        <begin position="308"/>
        <end position="465"/>
    </location>
</feature>
<feature type="sequence variant" id="VAR_080254" description="In VCRL2; strongly reduced 3-hydroxykynureninase activity." evidence="6">
    <location>
        <begin position="156"/>
        <end position="465"/>
    </location>
</feature>
<feature type="sequence variant" id="VAR_049724" description="In dbSNP:rs2304705.">
    <original>R</original>
    <variation>Q</variation>
    <location>
        <position position="188"/>
    </location>
</feature>
<feature type="sequence variant" id="VAR_054401" description="In HYXKY; reduced 3-hydroxykynureninase activity; dbSNP:rs606231307." evidence="5 6">
    <original>T</original>
    <variation>A</variation>
    <location>
        <position position="198"/>
    </location>
</feature>
<feature type="sequence variant" id="VAR_022092" description="In dbSNP:rs9013." evidence="3">
    <original>K</original>
    <variation>E</variation>
    <location>
        <position position="412"/>
    </location>
</feature>
<feature type="helix" evidence="13">
    <location>
        <begin position="9"/>
        <end position="20"/>
    </location>
</feature>
<feature type="helix" evidence="13">
    <location>
        <begin position="27"/>
        <end position="35"/>
    </location>
</feature>
<feature type="helix" evidence="13">
    <location>
        <begin position="40"/>
        <end position="45"/>
    </location>
</feature>
<feature type="helix" evidence="13">
    <location>
        <begin position="51"/>
        <end position="53"/>
    </location>
</feature>
<feature type="helix" evidence="13">
    <location>
        <begin position="59"/>
        <end position="61"/>
    </location>
</feature>
<feature type="turn" evidence="13">
    <location>
        <begin position="73"/>
        <end position="75"/>
    </location>
</feature>
<feature type="helix" evidence="13">
    <location>
        <begin position="83"/>
        <end position="97"/>
    </location>
</feature>
<feature type="helix" evidence="13">
    <location>
        <begin position="98"/>
        <end position="102"/>
    </location>
</feature>
<feature type="strand" evidence="13">
    <location>
        <begin position="104"/>
        <end position="107"/>
    </location>
</feature>
<feature type="helix" evidence="13">
    <location>
        <begin position="109"/>
        <end position="111"/>
    </location>
</feature>
<feature type="helix" evidence="13">
    <location>
        <begin position="114"/>
        <end position="117"/>
    </location>
</feature>
<feature type="helix" evidence="13">
    <location>
        <begin position="118"/>
        <end position="120"/>
    </location>
</feature>
<feature type="helix" evidence="13">
    <location>
        <begin position="121"/>
        <end position="124"/>
    </location>
</feature>
<feature type="helix" evidence="13">
    <location>
        <begin position="128"/>
        <end position="130"/>
    </location>
</feature>
<feature type="strand" evidence="13">
    <location>
        <begin position="131"/>
        <end position="133"/>
    </location>
</feature>
<feature type="helix" evidence="13">
    <location>
        <begin position="137"/>
        <end position="148"/>
    </location>
</feature>
<feature type="strand" evidence="13">
    <location>
        <begin position="153"/>
        <end position="155"/>
    </location>
</feature>
<feature type="strand" evidence="13">
    <location>
        <begin position="157"/>
        <end position="161"/>
    </location>
</feature>
<feature type="helix" evidence="13">
    <location>
        <begin position="166"/>
        <end position="178"/>
    </location>
</feature>
<feature type="helix" evidence="13">
    <location>
        <begin position="183"/>
        <end position="186"/>
    </location>
</feature>
<feature type="strand" evidence="13">
    <location>
        <begin position="187"/>
        <end position="190"/>
    </location>
</feature>
<feature type="helix" evidence="13">
    <location>
        <begin position="201"/>
        <end position="211"/>
    </location>
</feature>
<feature type="helix" evidence="13">
    <location>
        <begin position="212"/>
        <end position="214"/>
    </location>
</feature>
<feature type="strand" evidence="13">
    <location>
        <begin position="215"/>
        <end position="223"/>
    </location>
</feature>
<feature type="turn" evidence="13">
    <location>
        <begin position="225"/>
        <end position="227"/>
    </location>
</feature>
<feature type="helix" evidence="13">
    <location>
        <begin position="233"/>
        <end position="242"/>
    </location>
</feature>
<feature type="strand" evidence="13">
    <location>
        <begin position="246"/>
        <end position="250"/>
    </location>
</feature>
<feature type="turn" evidence="13">
    <location>
        <begin position="252"/>
        <end position="257"/>
    </location>
</feature>
<feature type="helix" evidence="13">
    <location>
        <begin position="262"/>
        <end position="265"/>
    </location>
</feature>
<feature type="strand" evidence="13">
    <location>
        <begin position="269"/>
        <end position="272"/>
    </location>
</feature>
<feature type="strand" evidence="13">
    <location>
        <begin position="274"/>
        <end position="276"/>
    </location>
</feature>
<feature type="strand" evidence="13">
    <location>
        <begin position="287"/>
        <end position="290"/>
    </location>
</feature>
<feature type="helix" evidence="13">
    <location>
        <begin position="292"/>
        <end position="294"/>
    </location>
</feature>
<feature type="turn" evidence="13">
    <location>
        <begin position="295"/>
        <end position="297"/>
    </location>
</feature>
<feature type="helix" evidence="13">
    <location>
        <begin position="305"/>
        <end position="307"/>
    </location>
</feature>
<feature type="helix" evidence="13">
    <location>
        <begin position="310"/>
        <end position="313"/>
    </location>
</feature>
<feature type="helix" evidence="13">
    <location>
        <begin position="326"/>
        <end position="329"/>
    </location>
</feature>
<feature type="helix" evidence="13">
    <location>
        <begin position="336"/>
        <end position="352"/>
    </location>
</feature>
<feature type="helix" evidence="13">
    <location>
        <begin position="354"/>
        <end position="375"/>
    </location>
</feature>
<feature type="strand" evidence="13">
    <location>
        <begin position="388"/>
        <end position="390"/>
    </location>
</feature>
<feature type="helix" evidence="13">
    <location>
        <begin position="396"/>
        <end position="398"/>
    </location>
</feature>
<feature type="strand" evidence="13">
    <location>
        <begin position="403"/>
        <end position="407"/>
    </location>
</feature>
<feature type="strand" evidence="14">
    <location>
        <begin position="410"/>
        <end position="412"/>
    </location>
</feature>
<feature type="helix" evidence="13">
    <location>
        <begin position="414"/>
        <end position="419"/>
    </location>
</feature>
<feature type="turn" evidence="13">
    <location>
        <begin position="420"/>
        <end position="422"/>
    </location>
</feature>
<feature type="strand" evidence="13">
    <location>
        <begin position="426"/>
        <end position="428"/>
    </location>
</feature>
<feature type="turn" evidence="13">
    <location>
        <begin position="429"/>
        <end position="431"/>
    </location>
</feature>
<feature type="strand" evidence="13">
    <location>
        <begin position="432"/>
        <end position="436"/>
    </location>
</feature>
<feature type="turn" evidence="13">
    <location>
        <begin position="439"/>
        <end position="441"/>
    </location>
</feature>
<feature type="helix" evidence="13">
    <location>
        <begin position="444"/>
        <end position="458"/>
    </location>
</feature>
<reference key="1">
    <citation type="journal article" date="1996" name="Eur. J. Biochem.">
        <title>Isolation and expression of a cDNA clone encoding human kynureninase.</title>
        <authorList>
            <person name="Alberati-Giani D."/>
            <person name="Buchli R."/>
            <person name="Malherbe P."/>
            <person name="Broger C."/>
            <person name="Lang G."/>
            <person name="Koehler C."/>
            <person name="Lahm H.-W."/>
            <person name="Cesura A.M."/>
        </authorList>
    </citation>
    <scope>NUCLEOTIDE SEQUENCE [MRNA] (ISOFORM 1)</scope>
    <scope>FUNCTION</scope>
    <scope>SUBCELLULAR LOCATION</scope>
    <scope>TISSUE SPECIFICITY</scope>
    <scope>CATALYTIC ACTIVITY</scope>
    <scope>ACTIVITY REGULATION</scope>
    <scope>BIOPHYSICOCHEMICAL PROPERTIES</scope>
    <source>
        <tissue>Hepatoma</tissue>
    </source>
</reference>
<reference key="2">
    <citation type="journal article" date="1997" name="FEBS Lett.">
        <title>Cloning and recombinant expression of rat and human kynureninase.</title>
        <authorList>
            <person name="Toma S."/>
            <person name="Nakamura M."/>
            <person name="Tone S."/>
            <person name="Okuno E."/>
            <person name="Kido R."/>
            <person name="Breton J."/>
            <person name="Avanzi N."/>
            <person name="Cozzi L."/>
            <person name="Speciale C."/>
            <person name="Mostardini M."/>
            <person name="Gatti S."/>
            <person name="Benatti L."/>
        </authorList>
    </citation>
    <scope>NUCLEOTIDE SEQUENCE [MRNA] (ISOFORM 1)</scope>
    <scope>FUNCTION</scope>
    <scope>TISSUE SPECIFICITY</scope>
    <scope>CATALYTIC ACTIVITY</scope>
    <scope>ACTIVITY REGULATION</scope>
    <scope>BIOPHYSICOCHEMICAL PROPERTIES</scope>
    <source>
        <tissue>Liver</tissue>
    </source>
</reference>
<reference key="3">
    <citation type="journal article" date="2004" name="Nat. Genet.">
        <title>Complete sequencing and characterization of 21,243 full-length human cDNAs.</title>
        <authorList>
            <person name="Ota T."/>
            <person name="Suzuki Y."/>
            <person name="Nishikawa T."/>
            <person name="Otsuki T."/>
            <person name="Sugiyama T."/>
            <person name="Irie R."/>
            <person name="Wakamatsu A."/>
            <person name="Hayashi K."/>
            <person name="Sato H."/>
            <person name="Nagai K."/>
            <person name="Kimura K."/>
            <person name="Makita H."/>
            <person name="Sekine M."/>
            <person name="Obayashi M."/>
            <person name="Nishi T."/>
            <person name="Shibahara T."/>
            <person name="Tanaka T."/>
            <person name="Ishii S."/>
            <person name="Yamamoto J."/>
            <person name="Saito K."/>
            <person name="Kawai Y."/>
            <person name="Isono Y."/>
            <person name="Nakamura Y."/>
            <person name="Nagahari K."/>
            <person name="Murakami K."/>
            <person name="Yasuda T."/>
            <person name="Iwayanagi T."/>
            <person name="Wagatsuma M."/>
            <person name="Shiratori A."/>
            <person name="Sudo H."/>
            <person name="Hosoiri T."/>
            <person name="Kaku Y."/>
            <person name="Kodaira H."/>
            <person name="Kondo H."/>
            <person name="Sugawara M."/>
            <person name="Takahashi M."/>
            <person name="Kanda K."/>
            <person name="Yokoi T."/>
            <person name="Furuya T."/>
            <person name="Kikkawa E."/>
            <person name="Omura Y."/>
            <person name="Abe K."/>
            <person name="Kamihara K."/>
            <person name="Katsuta N."/>
            <person name="Sato K."/>
            <person name="Tanikawa M."/>
            <person name="Yamazaki M."/>
            <person name="Ninomiya K."/>
            <person name="Ishibashi T."/>
            <person name="Yamashita H."/>
            <person name="Murakawa K."/>
            <person name="Fujimori K."/>
            <person name="Tanai H."/>
            <person name="Kimata M."/>
            <person name="Watanabe M."/>
            <person name="Hiraoka S."/>
            <person name="Chiba Y."/>
            <person name="Ishida S."/>
            <person name="Ono Y."/>
            <person name="Takiguchi S."/>
            <person name="Watanabe S."/>
            <person name="Yosida M."/>
            <person name="Hotuta T."/>
            <person name="Kusano J."/>
            <person name="Kanehori K."/>
            <person name="Takahashi-Fujii A."/>
            <person name="Hara H."/>
            <person name="Tanase T.-O."/>
            <person name="Nomura Y."/>
            <person name="Togiya S."/>
            <person name="Komai F."/>
            <person name="Hara R."/>
            <person name="Takeuchi K."/>
            <person name="Arita M."/>
            <person name="Imose N."/>
            <person name="Musashino K."/>
            <person name="Yuuki H."/>
            <person name="Oshima A."/>
            <person name="Sasaki N."/>
            <person name="Aotsuka S."/>
            <person name="Yoshikawa Y."/>
            <person name="Matsunawa H."/>
            <person name="Ichihara T."/>
            <person name="Shiohata N."/>
            <person name="Sano S."/>
            <person name="Moriya S."/>
            <person name="Momiyama H."/>
            <person name="Satoh N."/>
            <person name="Takami S."/>
            <person name="Terashima Y."/>
            <person name="Suzuki O."/>
            <person name="Nakagawa S."/>
            <person name="Senoh A."/>
            <person name="Mizoguchi H."/>
            <person name="Goto Y."/>
            <person name="Shimizu F."/>
            <person name="Wakebe H."/>
            <person name="Hishigaki H."/>
            <person name="Watanabe T."/>
            <person name="Sugiyama A."/>
            <person name="Takemoto M."/>
            <person name="Kawakami B."/>
            <person name="Yamazaki M."/>
            <person name="Watanabe K."/>
            <person name="Kumagai A."/>
            <person name="Itakura S."/>
            <person name="Fukuzumi Y."/>
            <person name="Fujimori Y."/>
            <person name="Komiyama M."/>
            <person name="Tashiro H."/>
            <person name="Tanigami A."/>
            <person name="Fujiwara T."/>
            <person name="Ono T."/>
            <person name="Yamada K."/>
            <person name="Fujii Y."/>
            <person name="Ozaki K."/>
            <person name="Hirao M."/>
            <person name="Ohmori Y."/>
            <person name="Kawabata A."/>
            <person name="Hikiji T."/>
            <person name="Kobatake N."/>
            <person name="Inagaki H."/>
            <person name="Ikema Y."/>
            <person name="Okamoto S."/>
            <person name="Okitani R."/>
            <person name="Kawakami T."/>
            <person name="Noguchi S."/>
            <person name="Itoh T."/>
            <person name="Shigeta K."/>
            <person name="Senba T."/>
            <person name="Matsumura K."/>
            <person name="Nakajima Y."/>
            <person name="Mizuno T."/>
            <person name="Morinaga M."/>
            <person name="Sasaki M."/>
            <person name="Togashi T."/>
            <person name="Oyama M."/>
            <person name="Hata H."/>
            <person name="Watanabe M."/>
            <person name="Komatsu T."/>
            <person name="Mizushima-Sugano J."/>
            <person name="Satoh T."/>
            <person name="Shirai Y."/>
            <person name="Takahashi Y."/>
            <person name="Nakagawa K."/>
            <person name="Okumura K."/>
            <person name="Nagase T."/>
            <person name="Nomura N."/>
            <person name="Kikuchi H."/>
            <person name="Masuho Y."/>
            <person name="Yamashita R."/>
            <person name="Nakai K."/>
            <person name="Yada T."/>
            <person name="Nakamura Y."/>
            <person name="Ohara O."/>
            <person name="Isogai T."/>
            <person name="Sugano S."/>
        </authorList>
    </citation>
    <scope>NUCLEOTIDE SEQUENCE [LARGE SCALE MRNA] (ISOFORM 1)</scope>
    <scope>VARIANT GLU-412</scope>
    <source>
        <tissue>Synovium</tissue>
    </source>
</reference>
<reference key="4">
    <citation type="submission" date="2004-06" db="EMBL/GenBank/DDBJ databases">
        <title>Cloning of human full open reading frames in Gateway(TM) system entry vector (pDONR201).</title>
        <authorList>
            <person name="Ebert L."/>
            <person name="Schick M."/>
            <person name="Neubert P."/>
            <person name="Schatten R."/>
            <person name="Henze S."/>
            <person name="Korn B."/>
        </authorList>
    </citation>
    <scope>NUCLEOTIDE SEQUENCE [LARGE SCALE MRNA] (ISOFORM 1)</scope>
</reference>
<reference key="5">
    <citation type="journal article" date="2005" name="Nature">
        <title>Generation and annotation of the DNA sequences of human chromosomes 2 and 4.</title>
        <authorList>
            <person name="Hillier L.W."/>
            <person name="Graves T.A."/>
            <person name="Fulton R.S."/>
            <person name="Fulton L.A."/>
            <person name="Pepin K.H."/>
            <person name="Minx P."/>
            <person name="Wagner-McPherson C."/>
            <person name="Layman D."/>
            <person name="Wylie K."/>
            <person name="Sekhon M."/>
            <person name="Becker M.C."/>
            <person name="Fewell G.A."/>
            <person name="Delehaunty K.D."/>
            <person name="Miner T.L."/>
            <person name="Nash W.E."/>
            <person name="Kremitzki C."/>
            <person name="Oddy L."/>
            <person name="Du H."/>
            <person name="Sun H."/>
            <person name="Bradshaw-Cordum H."/>
            <person name="Ali J."/>
            <person name="Carter J."/>
            <person name="Cordes M."/>
            <person name="Harris A."/>
            <person name="Isak A."/>
            <person name="van Brunt A."/>
            <person name="Nguyen C."/>
            <person name="Du F."/>
            <person name="Courtney L."/>
            <person name="Kalicki J."/>
            <person name="Ozersky P."/>
            <person name="Abbott S."/>
            <person name="Armstrong J."/>
            <person name="Belter E.A."/>
            <person name="Caruso L."/>
            <person name="Cedroni M."/>
            <person name="Cotton M."/>
            <person name="Davidson T."/>
            <person name="Desai A."/>
            <person name="Elliott G."/>
            <person name="Erb T."/>
            <person name="Fronick C."/>
            <person name="Gaige T."/>
            <person name="Haakenson W."/>
            <person name="Haglund K."/>
            <person name="Holmes A."/>
            <person name="Harkins R."/>
            <person name="Kim K."/>
            <person name="Kruchowski S.S."/>
            <person name="Strong C.M."/>
            <person name="Grewal N."/>
            <person name="Goyea E."/>
            <person name="Hou S."/>
            <person name="Levy A."/>
            <person name="Martinka S."/>
            <person name="Mead K."/>
            <person name="McLellan M.D."/>
            <person name="Meyer R."/>
            <person name="Randall-Maher J."/>
            <person name="Tomlinson C."/>
            <person name="Dauphin-Kohlberg S."/>
            <person name="Kozlowicz-Reilly A."/>
            <person name="Shah N."/>
            <person name="Swearengen-Shahid S."/>
            <person name="Snider J."/>
            <person name="Strong J.T."/>
            <person name="Thompson J."/>
            <person name="Yoakum M."/>
            <person name="Leonard S."/>
            <person name="Pearman C."/>
            <person name="Trani L."/>
            <person name="Radionenko M."/>
            <person name="Waligorski J.E."/>
            <person name="Wang C."/>
            <person name="Rock S.M."/>
            <person name="Tin-Wollam A.-M."/>
            <person name="Maupin R."/>
            <person name="Latreille P."/>
            <person name="Wendl M.C."/>
            <person name="Yang S.-P."/>
            <person name="Pohl C."/>
            <person name="Wallis J.W."/>
            <person name="Spieth J."/>
            <person name="Bieri T.A."/>
            <person name="Berkowicz N."/>
            <person name="Nelson J.O."/>
            <person name="Osborne J."/>
            <person name="Ding L."/>
            <person name="Meyer R."/>
            <person name="Sabo A."/>
            <person name="Shotland Y."/>
            <person name="Sinha P."/>
            <person name="Wohldmann P.E."/>
            <person name="Cook L.L."/>
            <person name="Hickenbotham M.T."/>
            <person name="Eldred J."/>
            <person name="Williams D."/>
            <person name="Jones T.A."/>
            <person name="She X."/>
            <person name="Ciccarelli F.D."/>
            <person name="Izaurralde E."/>
            <person name="Taylor J."/>
            <person name="Schmutz J."/>
            <person name="Myers R.M."/>
            <person name="Cox D.R."/>
            <person name="Huang X."/>
            <person name="McPherson J.D."/>
            <person name="Mardis E.R."/>
            <person name="Clifton S.W."/>
            <person name="Warren W.C."/>
            <person name="Chinwalla A.T."/>
            <person name="Eddy S.R."/>
            <person name="Marra M.A."/>
            <person name="Ovcharenko I."/>
            <person name="Furey T.S."/>
            <person name="Miller W."/>
            <person name="Eichler E.E."/>
            <person name="Bork P."/>
            <person name="Suyama M."/>
            <person name="Torrents D."/>
            <person name="Waterston R.H."/>
            <person name="Wilson R.K."/>
        </authorList>
    </citation>
    <scope>NUCLEOTIDE SEQUENCE [LARGE SCALE GENOMIC DNA]</scope>
</reference>
<reference key="6">
    <citation type="submission" date="2005-09" db="EMBL/GenBank/DDBJ databases">
        <authorList>
            <person name="Mural R.J."/>
            <person name="Istrail S."/>
            <person name="Sutton G.G."/>
            <person name="Florea L."/>
            <person name="Halpern A.L."/>
            <person name="Mobarry C.M."/>
            <person name="Lippert R."/>
            <person name="Walenz B."/>
            <person name="Shatkay H."/>
            <person name="Dew I."/>
            <person name="Miller J.R."/>
            <person name="Flanigan M.J."/>
            <person name="Edwards N.J."/>
            <person name="Bolanos R."/>
            <person name="Fasulo D."/>
            <person name="Halldorsson B.V."/>
            <person name="Hannenhalli S."/>
            <person name="Turner R."/>
            <person name="Yooseph S."/>
            <person name="Lu F."/>
            <person name="Nusskern D.R."/>
            <person name="Shue B.C."/>
            <person name="Zheng X.H."/>
            <person name="Zhong F."/>
            <person name="Delcher A.L."/>
            <person name="Huson D.H."/>
            <person name="Kravitz S.A."/>
            <person name="Mouchard L."/>
            <person name="Reinert K."/>
            <person name="Remington K.A."/>
            <person name="Clark A.G."/>
            <person name="Waterman M.S."/>
            <person name="Eichler E.E."/>
            <person name="Adams M.D."/>
            <person name="Hunkapiller M.W."/>
            <person name="Myers E.W."/>
            <person name="Venter J.C."/>
        </authorList>
    </citation>
    <scope>NUCLEOTIDE SEQUENCE [LARGE SCALE GENOMIC DNA]</scope>
</reference>
<reference key="7">
    <citation type="journal article" date="2004" name="Genome Res.">
        <title>The status, quality, and expansion of the NIH full-length cDNA project: the Mammalian Gene Collection (MGC).</title>
        <authorList>
            <consortium name="The MGC Project Team"/>
        </authorList>
    </citation>
    <scope>NUCLEOTIDE SEQUENCE [LARGE SCALE MRNA] (ISOFORM 1)</scope>
    <source>
        <tissue>Cervix</tissue>
    </source>
</reference>
<reference key="8">
    <citation type="journal article" date="2002" name="Eur. J. Biochem.">
        <title>Purification and biochemical characterization of some of the properties of recombinant human kynureninase.</title>
        <authorList>
            <person name="Walsh H.A."/>
            <person name="Botting N.P."/>
        </authorList>
    </citation>
    <scope>MASS SPECTROMETRY</scope>
    <scope>FUNCTION</scope>
    <scope>CATALYTIC ACTIVITY</scope>
    <scope>BIOPHYSICOCHEMICAL PROPERTIES</scope>
</reference>
<reference key="9">
    <citation type="journal article" date="2011" name="BMC Syst. Biol.">
        <title>Initial characterization of the human central proteome.</title>
        <authorList>
            <person name="Burkard T.R."/>
            <person name="Planyavsky M."/>
            <person name="Kaupe I."/>
            <person name="Breitwieser F.P."/>
            <person name="Buerckstuemmer T."/>
            <person name="Bennett K.L."/>
            <person name="Superti-Furga G."/>
            <person name="Colinge J."/>
        </authorList>
    </citation>
    <scope>IDENTIFICATION BY MASS SPECTROMETRY [LARGE SCALE ANALYSIS]</scope>
</reference>
<reference key="10">
    <citation type="journal article" date="2012" name="Proc. Natl. Acad. Sci. U.S.A.">
        <title>N-terminal acetylome analyses and functional insights of the N-terminal acetyltransferase NatB.</title>
        <authorList>
            <person name="Van Damme P."/>
            <person name="Lasa M."/>
            <person name="Polevoda B."/>
            <person name="Gazquez C."/>
            <person name="Elosegui-Artola A."/>
            <person name="Kim D.S."/>
            <person name="De Juan-Pardo E."/>
            <person name="Demeyer K."/>
            <person name="Hole K."/>
            <person name="Larrea E."/>
            <person name="Timmerman E."/>
            <person name="Prieto J."/>
            <person name="Arnesen T."/>
            <person name="Sherman F."/>
            <person name="Gevaert K."/>
            <person name="Aldabe R."/>
        </authorList>
    </citation>
    <scope>ACETYLATION [LARGE SCALE ANALYSIS] AT MET-1</scope>
    <scope>IDENTIFICATION BY MASS SPECTROMETRY [LARGE SCALE ANALYSIS]</scope>
</reference>
<reference key="11">
    <citation type="journal article" date="2014" name="J. Proteomics">
        <title>An enzyme assisted RP-RPLC approach for in-depth analysis of human liver phosphoproteome.</title>
        <authorList>
            <person name="Bian Y."/>
            <person name="Song C."/>
            <person name="Cheng K."/>
            <person name="Dong M."/>
            <person name="Wang F."/>
            <person name="Huang J."/>
            <person name="Sun D."/>
            <person name="Wang L."/>
            <person name="Ye M."/>
            <person name="Zou H."/>
        </authorList>
    </citation>
    <scope>IDENTIFICATION BY MASS SPECTROMETRY [LARGE SCALE ANALYSIS]</scope>
    <source>
        <tissue>Liver</tissue>
    </source>
</reference>
<reference key="12">
    <citation type="journal article" date="2007" name="Biochemistry">
        <title>Crystal structure of Homo sapiens kynureninase.</title>
        <authorList>
            <person name="Lima S."/>
            <person name="Khristoforov R."/>
            <person name="Momany C."/>
            <person name="Phillips R.S."/>
        </authorList>
    </citation>
    <scope>X-RAY CRYSTALLOGRAPHY (2.0 ANGSTROMS) IN COMPLEX WITH PYRIDOXAL PHOSPHATE</scope>
    <scope>HOMODIMERIZATION</scope>
    <scope>COFACTOR</scope>
    <scope>FUNCTION</scope>
    <scope>CATALYTIC ACTIVITY</scope>
    <scope>BIOPHYSICOCHEMICAL PROPERTIES</scope>
</reference>
<reference key="13">
    <citation type="journal article" date="2007" name="J. Inherit. Metab. Dis.">
        <title>Xanthurenic aciduria due to a mutation in KYNU encoding kynureninase.</title>
        <authorList>
            <person name="Christensen M."/>
            <person name="Duno M."/>
            <person name="Lund A.M."/>
            <person name="Skovby F."/>
            <person name="Christensen E."/>
        </authorList>
    </citation>
    <scope>INVOLVEMENT IN HYXKY</scope>
    <scope>VARIANT HYXKY ALA-198</scope>
</reference>
<reference key="14">
    <citation type="journal article" date="2017" name="N. Engl. J. Med.">
        <title>NAD deficiency, congenital malformations, and niacin supplementation.</title>
        <authorList>
            <person name="Shi H."/>
            <person name="Enriquez A."/>
            <person name="Rapadas M."/>
            <person name="Martin E.M.M.A."/>
            <person name="Wang R."/>
            <person name="Moreau J."/>
            <person name="Lim C.K."/>
            <person name="Szot J.O."/>
            <person name="Ip E."/>
            <person name="Hughes J.N."/>
            <person name="Sugimoto K."/>
            <person name="Humphreys D.T."/>
            <person name="McInerney-Leo A.M."/>
            <person name="Leo P.J."/>
            <person name="Maghzal G.J."/>
            <person name="Halliday J."/>
            <person name="Smith J."/>
            <person name="Colley A."/>
            <person name="Mark P.R."/>
            <person name="Collins F."/>
            <person name="Sillence D.O."/>
            <person name="Winlaw D.S."/>
            <person name="Ho J.W.K."/>
            <person name="Guillemin G.J."/>
            <person name="Brown M.A."/>
            <person name="Kikuchi K."/>
            <person name="Thomas P.Q."/>
            <person name="Stocker R."/>
            <person name="Giannoulatou E."/>
            <person name="Chapman G."/>
            <person name="Duncan E.L."/>
            <person name="Sparrow D.B."/>
            <person name="Dunwoodie S.L."/>
        </authorList>
    </citation>
    <scope>INVOLVEMENT IN VCRL2</scope>
    <scope>VARIANT VCRL2 156-TYR--ASN-465 DEL</scope>
    <scope>FUNCTION</scope>
    <scope>CATALYTIC ACTIVITY</scope>
    <scope>PATHWAY</scope>
    <scope>CHARACTERIZATION OF VARIANT VCRL2 156-TYR--ASN-465 DEL</scope>
    <scope>CHARACTERIZATION OF VARIANT HYXKY ALA-198</scope>
</reference>
<sequence length="465" mass="52352">MEPSSLELPADTVQRIAAELKCHPTDERVALHLDEEDKLRHFRECFYIPKIQDLPPVDLSLVNKDENAIYFLGNSLGLQPKMVKTYLEEELDKWAKIAAYGHEVGKRPWITGDESIVGLMKDIVGANEKEIALMNALTVNLHLLMLSFFKPTPKRYKILLEAKAFPSDHYAIESQLQLHGLNIEESMRMIKPREGEETLRIEDILEVIEKEGDSIAVILFSGVHFYTGQHFNIPAITKAGQAKGCYVGFDLAHAVGNVELYLHDWGVDFACWCSYKYLNAGAGGIAGAFIHEKHAHTIKPALVGWFGHELSTRFKMDNKLQLIPGVCGFRISNPPILLVCSLHASLEIFKQATMKALRKKSVLLTGYLEYLIKHNYGKDKAATKKPVVNIITPSHVEERGCQLTITFSVPNKDVFQELEKRGVVCDKRNPNGIRVAPVPLYNSFHDVYKFTNLLTSILDSAETKN</sequence>
<protein>
    <recommendedName>
        <fullName evidence="1">Kynureninase</fullName>
        <ecNumber evidence="1 2 4 7 8">3.7.1.3</ecNumber>
    </recommendedName>
    <alternativeName>
        <fullName evidence="1">L-kynurenine hydrolase</fullName>
    </alternativeName>
</protein>
<name>KYNU_HUMAN</name>
<comment type="function">
    <text evidence="2 4 6 7 8">Catalyzes the cleavage of L-kynurenine (L-Kyn) and L-3-hydroxykynurenine (L-3OHKyn) into anthranilic acid (AA) and 3-hydroxyanthranilic acid (3-OHAA), respectively. Has a preference for the L-3-hydroxy form. Also has cysteine-conjugate-beta-lyase activity.</text>
</comment>
<comment type="catalytic activity">
    <reaction evidence="1 2 4 7 8">
        <text>L-kynurenine + H2O = anthranilate + L-alanine + H(+)</text>
        <dbReference type="Rhea" id="RHEA:16813"/>
        <dbReference type="ChEBI" id="CHEBI:15377"/>
        <dbReference type="ChEBI" id="CHEBI:15378"/>
        <dbReference type="ChEBI" id="CHEBI:16567"/>
        <dbReference type="ChEBI" id="CHEBI:57959"/>
        <dbReference type="ChEBI" id="CHEBI:57972"/>
        <dbReference type="EC" id="3.7.1.3"/>
    </reaction>
</comment>
<comment type="catalytic activity">
    <reaction evidence="1 2 4 6 7 8">
        <text>3-hydroxy-L-kynurenine + H2O = 3-hydroxyanthranilate + L-alanine + H(+)</text>
        <dbReference type="Rhea" id="RHEA:25143"/>
        <dbReference type="ChEBI" id="CHEBI:15377"/>
        <dbReference type="ChEBI" id="CHEBI:15378"/>
        <dbReference type="ChEBI" id="CHEBI:36559"/>
        <dbReference type="ChEBI" id="CHEBI:57972"/>
        <dbReference type="ChEBI" id="CHEBI:58125"/>
        <dbReference type="EC" id="3.7.1.3"/>
    </reaction>
</comment>
<comment type="cofactor">
    <cofactor evidence="4">
        <name>pyridoxal 5'-phosphate</name>
        <dbReference type="ChEBI" id="CHEBI:597326"/>
    </cofactor>
</comment>
<comment type="activity regulation">
    <text evidence="7 8">Inhibited by o-methoxybenzoylalanine (OMBA).</text>
</comment>
<comment type="biophysicochemical properties">
    <kinetics>
        <KM evidence="2 4 7 8">493 uM for L-kynurenine (at pH 7.0)</KM>
        <KM evidence="2 4 7 8">28.3 uM for DL-3-hydroxykynurenine (at pH 7.0)</KM>
        <KM evidence="2 4 7 8">3 uM for DL-3-hydroxykynurenine (at pH 7.9)</KM>
    </kinetics>
    <phDependence>
        <text evidence="2 4 7 8">Optimum pH is 8.25 with DL-3-hydroxykynurenine as substrate.</text>
    </phDependence>
</comment>
<comment type="pathway">
    <text evidence="1">Amino-acid degradation; L-kynurenine degradation; L-alanine and anthranilate from L-kynurenine: step 1/1.</text>
</comment>
<comment type="pathway">
    <text evidence="1 6">Cofactor biosynthesis; NAD(+) biosynthesis; quinolinate from L-kynurenine: step 2/3.</text>
</comment>
<comment type="subunit">
    <text evidence="1 4">Homodimer.</text>
</comment>
<comment type="interaction">
    <interactant intactId="EBI-12351611">
        <id>Q16719-2</id>
    </interactant>
    <interactant intactId="EBI-6873363">
        <id>Q8WUE5</id>
        <label>CT55</label>
    </interactant>
    <organismsDiffer>false</organismsDiffer>
    <experiments>3</experiments>
</comment>
<comment type="interaction">
    <interactant intactId="EBI-12351611">
        <id>Q16719-2</id>
    </interactant>
    <interactant intactId="EBI-10171902">
        <id>P56545-3</id>
        <label>CTBP2</label>
    </interactant>
    <organismsDiffer>false</organismsDiffer>
    <experiments>3</experiments>
</comment>
<comment type="interaction">
    <interactant intactId="EBI-12351611">
        <id>Q16719-2</id>
    </interactant>
    <interactant intactId="EBI-12845222">
        <id>Q9NVL1-2</id>
        <label>FAM86C1P</label>
    </interactant>
    <organismsDiffer>false</organismsDiffer>
    <experiments>3</experiments>
</comment>
<comment type="interaction">
    <interactant intactId="EBI-12351611">
        <id>Q16719-2</id>
    </interactant>
    <interactant intactId="EBI-2798728">
        <id>P61968</id>
        <label>LMO4</label>
    </interactant>
    <organismsDiffer>false</organismsDiffer>
    <experiments>3</experiments>
</comment>
<comment type="interaction">
    <interactant intactId="EBI-12351611">
        <id>Q16719-2</id>
    </interactant>
    <interactant intactId="EBI-11987923">
        <id>P59942</id>
        <label>MCCD1</label>
    </interactant>
    <organismsDiffer>false</organismsDiffer>
    <experiments>3</experiments>
</comment>
<comment type="interaction">
    <interactant intactId="EBI-12351611">
        <id>Q16719-2</id>
    </interactant>
    <interactant intactId="EBI-5662487">
        <id>Q8TDC0</id>
        <label>MYOZ3</label>
    </interactant>
    <organismsDiffer>false</organismsDiffer>
    <experiments>3</experiments>
</comment>
<comment type="interaction">
    <interactant intactId="EBI-12351611">
        <id>Q16719-2</id>
    </interactant>
    <interactant intactId="EBI-11532361">
        <id>P78356-2</id>
        <label>PIP4K2B</label>
    </interactant>
    <organismsDiffer>false</organismsDiffer>
    <experiments>3</experiments>
</comment>
<comment type="interaction">
    <interactant intactId="EBI-12351611">
        <id>Q16719-2</id>
    </interactant>
    <interactant intactId="EBI-2845202">
        <id>Q86WH2</id>
        <label>RASSF3</label>
    </interactant>
    <organismsDiffer>false</organismsDiffer>
    <experiments>3</experiments>
</comment>
<comment type="subcellular location">
    <subcellularLocation>
        <location evidence="1 7">Cytoplasm</location>
        <location evidence="1 7">Cytosol</location>
    </subcellularLocation>
</comment>
<comment type="alternative products">
    <event type="alternative splicing"/>
    <isoform>
        <id>Q16719-1</id>
        <name>1</name>
        <sequence type="displayed"/>
    </isoform>
    <isoform>
        <id>Q16719-2</id>
        <name>2</name>
        <sequence type="described" ref="VSP_042739 VSP_042740"/>
    </isoform>
</comment>
<comment type="tissue specificity">
    <text evidence="7 8">Expressed in all tissues tested (heart, brain placenta, lung, liver, skeletal muscle, kidney and pancreas). Highest levels found in placenta, liver and lung. Expressed in all brain regions.</text>
</comment>
<comment type="induction">
    <text>Increased levels in several cerebral and systemic inflammatory conditions.</text>
</comment>
<comment type="mass spectrometry" mass="52400.0" method="MALDI" evidence="2">
    <text>The reported mass is given to only three significant figures.</text>
</comment>
<comment type="disease" evidence="5 6">
    <disease id="DI-04276">
        <name>Hydroxykynureninuria</name>
        <acronym>HYXKY</acronym>
        <description>An inborn error of amino acid metabolism characterized by massive urinary excretion of large amounts of kynurenine, 3-hydroxykynurenine and xanthurenic acid. Affected individuals manifest renal tubular dysfunction, metabolic acidosis, psychomotor retardation, non-progressive encephalopathy, and muscular hypertonia.</description>
        <dbReference type="MIM" id="236800"/>
    </disease>
    <text>The disease is caused by variants affecting the gene represented in this entry.</text>
</comment>
<comment type="disease" evidence="6">
    <disease id="DI-05095">
        <name>Vertebral, cardiac, renal, and limb defects syndrome 2</name>
        <acronym>VCRL2</acronym>
        <description>An autosomal recessive congenital malformation syndrome characterized by vertebral segmentation abnormalities, congenital cardiac defects, renal defects, and distal mild limb defects.</description>
        <dbReference type="MIM" id="617661"/>
    </disease>
    <text>The disease is caused by variants affecting the gene represented in this entry.</text>
</comment>
<comment type="similarity">
    <text evidence="1">Belongs to the kynureninase family.</text>
</comment>
<comment type="caution">
    <text evidence="10">It has been reported that this enzyme possesses no measurable activity against L-kynurenine and is subject to inhibition by both L-kynurenine and D-kynurenine at pH 7.9.</text>
</comment>
<evidence type="ECO:0000255" key="1">
    <source>
        <dbReference type="HAMAP-Rule" id="MF_03017"/>
    </source>
</evidence>
<evidence type="ECO:0000269" key="2">
    <source>
    </source>
</evidence>
<evidence type="ECO:0000269" key="3">
    <source>
    </source>
</evidence>
<evidence type="ECO:0000269" key="4">
    <source>
    </source>
</evidence>
<evidence type="ECO:0000269" key="5">
    <source>
    </source>
</evidence>
<evidence type="ECO:0000269" key="6">
    <source>
    </source>
</evidence>
<evidence type="ECO:0000269" key="7">
    <source>
    </source>
</evidence>
<evidence type="ECO:0000269" key="8">
    <source>
    </source>
</evidence>
<evidence type="ECO:0000305" key="9"/>
<evidence type="ECO:0000305" key="10">
    <source>
    </source>
</evidence>
<evidence type="ECO:0000312" key="11">
    <source>
        <dbReference type="HGNC" id="HGNC:6469"/>
    </source>
</evidence>
<evidence type="ECO:0007744" key="12">
    <source>
    </source>
</evidence>
<evidence type="ECO:0007829" key="13">
    <source>
        <dbReference type="PDB" id="3E9K"/>
    </source>
</evidence>
<evidence type="ECO:0007829" key="14">
    <source>
        <dbReference type="PDB" id="7S3V"/>
    </source>
</evidence>
<accession>Q16719</accession>
<accession>B2RCZ5</accession>
<accession>D3DP79</accession>
<accession>Q6I9T2</accession>
<accession>Q9BVW3</accession>